<dbReference type="EC" id="2.9.1.1" evidence="1"/>
<dbReference type="EMBL" id="CP001280">
    <property type="protein sequence ID" value="ACK52240.1"/>
    <property type="molecule type" value="Genomic_DNA"/>
</dbReference>
<dbReference type="RefSeq" id="WP_012592309.1">
    <property type="nucleotide sequence ID" value="NC_011666.1"/>
</dbReference>
<dbReference type="SMR" id="B8ES25"/>
<dbReference type="STRING" id="395965.Msil_3334"/>
<dbReference type="KEGG" id="msl:Msil_3334"/>
<dbReference type="eggNOG" id="COG1921">
    <property type="taxonomic scope" value="Bacteria"/>
</dbReference>
<dbReference type="HOGENOM" id="CLU_038142_1_0_5"/>
<dbReference type="OrthoDB" id="9787096at2"/>
<dbReference type="UniPathway" id="UPA00906">
    <property type="reaction ID" value="UER00896"/>
</dbReference>
<dbReference type="Proteomes" id="UP000002257">
    <property type="component" value="Chromosome"/>
</dbReference>
<dbReference type="GO" id="GO:0005737">
    <property type="term" value="C:cytoplasm"/>
    <property type="evidence" value="ECO:0007669"/>
    <property type="project" value="UniProtKB-SubCell"/>
</dbReference>
<dbReference type="GO" id="GO:0004125">
    <property type="term" value="F:L-seryl-tRNA(Sec) selenium transferase activity"/>
    <property type="evidence" value="ECO:0007669"/>
    <property type="project" value="UniProtKB-UniRule"/>
</dbReference>
<dbReference type="GO" id="GO:0001717">
    <property type="term" value="P:conversion of seryl-tRNAsec to selenocys-tRNAsec"/>
    <property type="evidence" value="ECO:0007669"/>
    <property type="project" value="UniProtKB-UniRule"/>
</dbReference>
<dbReference type="GO" id="GO:0001514">
    <property type="term" value="P:selenocysteine incorporation"/>
    <property type="evidence" value="ECO:0007669"/>
    <property type="project" value="UniProtKB-UniRule"/>
</dbReference>
<dbReference type="FunFam" id="3.40.640.10:FF:000028">
    <property type="entry name" value="L-seryl-tRNA(Sec) selenium transferase"/>
    <property type="match status" value="1"/>
</dbReference>
<dbReference type="Gene3D" id="3.90.1150.180">
    <property type="match status" value="1"/>
</dbReference>
<dbReference type="Gene3D" id="3.40.640.10">
    <property type="entry name" value="Type I PLP-dependent aspartate aminotransferase-like (Major domain)"/>
    <property type="match status" value="1"/>
</dbReference>
<dbReference type="HAMAP" id="MF_00423">
    <property type="entry name" value="SelA"/>
    <property type="match status" value="1"/>
</dbReference>
<dbReference type="InterPro" id="IPR015424">
    <property type="entry name" value="PyrdxlP-dep_Trfase"/>
</dbReference>
<dbReference type="InterPro" id="IPR015421">
    <property type="entry name" value="PyrdxlP-dep_Trfase_major"/>
</dbReference>
<dbReference type="InterPro" id="IPR018319">
    <property type="entry name" value="SelA-like"/>
</dbReference>
<dbReference type="InterPro" id="IPR004534">
    <property type="entry name" value="SelA_trans"/>
</dbReference>
<dbReference type="InterPro" id="IPR025862">
    <property type="entry name" value="SelA_trans_N_dom"/>
</dbReference>
<dbReference type="NCBIfam" id="TIGR00474">
    <property type="entry name" value="selA"/>
    <property type="match status" value="1"/>
</dbReference>
<dbReference type="PANTHER" id="PTHR32328">
    <property type="entry name" value="L-SERYL-TRNA(SEC) SELENIUM TRANSFERASE"/>
    <property type="match status" value="1"/>
</dbReference>
<dbReference type="PANTHER" id="PTHR32328:SF0">
    <property type="entry name" value="L-SERYL-TRNA(SEC) SELENIUM TRANSFERASE"/>
    <property type="match status" value="1"/>
</dbReference>
<dbReference type="Pfam" id="PF12390">
    <property type="entry name" value="Se-cys_synth_N"/>
    <property type="match status" value="1"/>
</dbReference>
<dbReference type="Pfam" id="PF03841">
    <property type="entry name" value="SelA"/>
    <property type="match status" value="1"/>
</dbReference>
<dbReference type="SUPFAM" id="SSF53383">
    <property type="entry name" value="PLP-dependent transferases"/>
    <property type="match status" value="1"/>
</dbReference>
<evidence type="ECO:0000255" key="1">
    <source>
        <dbReference type="HAMAP-Rule" id="MF_00423"/>
    </source>
</evidence>
<feature type="chain" id="PRO_1000134926" description="L-seryl-tRNA(Sec) selenium transferase">
    <location>
        <begin position="1"/>
        <end position="469"/>
    </location>
</feature>
<feature type="modified residue" description="N6-(pyridoxal phosphate)lysine" evidence="1">
    <location>
        <position position="295"/>
    </location>
</feature>
<comment type="function">
    <text evidence="1">Converts seryl-tRNA(Sec) to selenocysteinyl-tRNA(Sec) required for selenoprotein biosynthesis.</text>
</comment>
<comment type="catalytic activity">
    <reaction evidence="1">
        <text>L-seryl-tRNA(Sec) + selenophosphate + H(+) = L-selenocysteinyl-tRNA(Sec) + phosphate</text>
        <dbReference type="Rhea" id="RHEA:22728"/>
        <dbReference type="Rhea" id="RHEA-COMP:9742"/>
        <dbReference type="Rhea" id="RHEA-COMP:9743"/>
        <dbReference type="ChEBI" id="CHEBI:15378"/>
        <dbReference type="ChEBI" id="CHEBI:16144"/>
        <dbReference type="ChEBI" id="CHEBI:43474"/>
        <dbReference type="ChEBI" id="CHEBI:78533"/>
        <dbReference type="ChEBI" id="CHEBI:78573"/>
        <dbReference type="EC" id="2.9.1.1"/>
    </reaction>
</comment>
<comment type="cofactor">
    <cofactor evidence="1">
        <name>pyridoxal 5'-phosphate</name>
        <dbReference type="ChEBI" id="CHEBI:597326"/>
    </cofactor>
</comment>
<comment type="pathway">
    <text evidence="1">Aminoacyl-tRNA biosynthesis; selenocysteinyl-tRNA(Sec) biosynthesis; selenocysteinyl-tRNA(Sec) from L-seryl-tRNA(Sec) (bacterial route): step 1/1.</text>
</comment>
<comment type="subcellular location">
    <subcellularLocation>
        <location evidence="1">Cytoplasm</location>
    </subcellularLocation>
</comment>
<comment type="similarity">
    <text evidence="1">Belongs to the SelA family.</text>
</comment>
<gene>
    <name evidence="1" type="primary">selA</name>
    <name type="ordered locus">Msil_3334</name>
</gene>
<organism>
    <name type="scientific">Methylocella silvestris (strain DSM 15510 / CIP 108128 / LMG 27833 / NCIMB 13906 / BL2)</name>
    <dbReference type="NCBI Taxonomy" id="395965"/>
    <lineage>
        <taxon>Bacteria</taxon>
        <taxon>Pseudomonadati</taxon>
        <taxon>Pseudomonadota</taxon>
        <taxon>Alphaproteobacteria</taxon>
        <taxon>Hyphomicrobiales</taxon>
        <taxon>Beijerinckiaceae</taxon>
        <taxon>Methylocella</taxon>
    </lineage>
</organism>
<keyword id="KW-0963">Cytoplasm</keyword>
<keyword id="KW-0648">Protein biosynthesis</keyword>
<keyword id="KW-0663">Pyridoxal phosphate</keyword>
<keyword id="KW-1185">Reference proteome</keyword>
<keyword id="KW-0711">Selenium</keyword>
<keyword id="KW-0808">Transferase</keyword>
<name>SELA_METSB</name>
<proteinExistence type="inferred from homology"/>
<protein>
    <recommendedName>
        <fullName evidence="1">L-seryl-tRNA(Sec) selenium transferase</fullName>
        <ecNumber evidence="1">2.9.1.1</ecNumber>
    </recommendedName>
    <alternativeName>
        <fullName evidence="1">Selenocysteine synthase</fullName>
        <shortName evidence="1">Sec synthase</shortName>
    </alternativeName>
    <alternativeName>
        <fullName evidence="1">Selenocysteinyl-tRNA(Sec) synthase</fullName>
    </alternativeName>
</protein>
<accession>B8ES25</accession>
<reference key="1">
    <citation type="journal article" date="2010" name="J. Bacteriol.">
        <title>Complete genome sequence of the aerobic facultative methanotroph Methylocella silvestris BL2.</title>
        <authorList>
            <person name="Chen Y."/>
            <person name="Crombie A."/>
            <person name="Rahman M.T."/>
            <person name="Dedysh S.N."/>
            <person name="Liesack W."/>
            <person name="Stott M.B."/>
            <person name="Alam M."/>
            <person name="Theisen A.R."/>
            <person name="Murrell J.C."/>
            <person name="Dunfield P.F."/>
        </authorList>
    </citation>
    <scope>NUCLEOTIDE SEQUENCE [LARGE SCALE GENOMIC DNA]</scope>
    <source>
        <strain>DSM 15510 / CIP 108128 / LMG 27833 / NCIMB 13906 / BL2</strain>
    </source>
</reference>
<sequence>MEGSSSGRLRDLPSVDAVLKAPAALAMLERFGRAASTDAVRAALADARAAIAGGASHAPDAAVLARAAEASLEADELSNMRPLFNLTGTVLHTNLGRAVLAEAAIEAAVAAMRDPVALEFDLETGKRGERDDHVRALLCELTGAEDATLVNNNAAAVLLCLNTLAAGREAIVSRGELIEIGGAFRMPDIMARAGAKLVEVGTTNRTHLKDYRVALSAQTGVILKVHTSNYRIEGFTAEVGAAELAALAGQANVPLMNDLGSGTLIDLSRYGLQREPTVREAVREGSGLVTFSGDKLLGGPQAGFIVGARALIEAVNRNPMKRALRVDKIRLAAIEATLKLYRDPDRLAERLPTLRLLARPLAEIEAQARRLLPAAAVAVEPAYQVALRLCRSQVGSGALPLDTIESAGLIIRPTNGSRSLERLAGALRALARPIIGRIEDGGLLLDLRCLTDEAGFLSSLSALDADALA</sequence>